<keyword id="KW-0997">Cell inner membrane</keyword>
<keyword id="KW-1003">Cell membrane</keyword>
<keyword id="KW-0963">Cytoplasm</keyword>
<keyword id="KW-0342">GTP-binding</keyword>
<keyword id="KW-0472">Membrane</keyword>
<keyword id="KW-0547">Nucleotide-binding</keyword>
<keyword id="KW-1185">Reference proteome</keyword>
<keyword id="KW-0690">Ribosome biogenesis</keyword>
<keyword id="KW-0694">RNA-binding</keyword>
<keyword id="KW-0699">rRNA-binding</keyword>
<organism>
    <name type="scientific">Pasteurella multocida (strain Pm70)</name>
    <dbReference type="NCBI Taxonomy" id="272843"/>
    <lineage>
        <taxon>Bacteria</taxon>
        <taxon>Pseudomonadati</taxon>
        <taxon>Pseudomonadota</taxon>
        <taxon>Gammaproteobacteria</taxon>
        <taxon>Pasteurellales</taxon>
        <taxon>Pasteurellaceae</taxon>
        <taxon>Pasteurella</taxon>
    </lineage>
</organism>
<accession>Q9CPH8</accession>
<name>ERA_PASMU</name>
<gene>
    <name evidence="1" type="primary">era</name>
    <name type="ordered locus">PM0060</name>
</gene>
<reference key="1">
    <citation type="journal article" date="2001" name="Proc. Natl. Acad. Sci. U.S.A.">
        <title>Complete genomic sequence of Pasteurella multocida Pm70.</title>
        <authorList>
            <person name="May B.J."/>
            <person name="Zhang Q."/>
            <person name="Li L.L."/>
            <person name="Paustian M.L."/>
            <person name="Whittam T.S."/>
            <person name="Kapur V."/>
        </authorList>
    </citation>
    <scope>NUCLEOTIDE SEQUENCE [LARGE SCALE GENOMIC DNA]</scope>
    <source>
        <strain>Pm70</strain>
    </source>
</reference>
<sequence>MNEIKTADNAKTYCGFIAIVGRPNVGKSTLLNKILGQKISITSRKAQTTRHRIVGIHTDGPYQAVYVDTPGLHIEEKRAINRLMNRAASSAIGDVDLIIFVVDGTHWNEDDEMVLNKLRAAKAPVVLAINKIDNIKNKEEMLPFITELTSKFDFAHVVPISAQGGKNIAELEKIVRESLHEGTHHFPEEYVTDRSQRFMASEIIREKLMRFTGDELPYSVTVEIEQFKLNERGTYEINGLILVEREGQKKMVIGNKGQKIKQIGIEARADMERLFDNKVHLELWVKVKSGWADDERALRSLGYMDE</sequence>
<comment type="function">
    <text evidence="1">An essential GTPase that binds both GDP and GTP, with rapid nucleotide exchange. Plays a role in 16S rRNA processing and 30S ribosomal subunit biogenesis and possibly also in cell cycle regulation and energy metabolism.</text>
</comment>
<comment type="subunit">
    <text evidence="1">Monomer.</text>
</comment>
<comment type="subcellular location">
    <subcellularLocation>
        <location>Cytoplasm</location>
    </subcellularLocation>
    <subcellularLocation>
        <location evidence="1">Cell inner membrane</location>
        <topology evidence="1">Peripheral membrane protein</topology>
    </subcellularLocation>
</comment>
<comment type="similarity">
    <text evidence="1 2">Belongs to the TRAFAC class TrmE-Era-EngA-EngB-Septin-like GTPase superfamily. Era GTPase family.</text>
</comment>
<proteinExistence type="inferred from homology"/>
<dbReference type="EMBL" id="AE004439">
    <property type="protein sequence ID" value="AAK02144.1"/>
    <property type="molecule type" value="Genomic_DNA"/>
</dbReference>
<dbReference type="RefSeq" id="WP_010906461.1">
    <property type="nucleotide sequence ID" value="NC_002663.1"/>
</dbReference>
<dbReference type="SMR" id="Q9CPH8"/>
<dbReference type="STRING" id="272843.PM0060"/>
<dbReference type="EnsemblBacteria" id="AAK02144">
    <property type="protein sequence ID" value="AAK02144"/>
    <property type="gene ID" value="PM0060"/>
</dbReference>
<dbReference type="KEGG" id="pmu:PM0060"/>
<dbReference type="HOGENOM" id="CLU_038009_1_0_6"/>
<dbReference type="OrthoDB" id="9805918at2"/>
<dbReference type="Proteomes" id="UP000000809">
    <property type="component" value="Chromosome"/>
</dbReference>
<dbReference type="GO" id="GO:0005829">
    <property type="term" value="C:cytosol"/>
    <property type="evidence" value="ECO:0007669"/>
    <property type="project" value="TreeGrafter"/>
</dbReference>
<dbReference type="GO" id="GO:0005886">
    <property type="term" value="C:plasma membrane"/>
    <property type="evidence" value="ECO:0007669"/>
    <property type="project" value="UniProtKB-SubCell"/>
</dbReference>
<dbReference type="GO" id="GO:0005525">
    <property type="term" value="F:GTP binding"/>
    <property type="evidence" value="ECO:0007669"/>
    <property type="project" value="UniProtKB-UniRule"/>
</dbReference>
<dbReference type="GO" id="GO:0003924">
    <property type="term" value="F:GTPase activity"/>
    <property type="evidence" value="ECO:0007669"/>
    <property type="project" value="UniProtKB-UniRule"/>
</dbReference>
<dbReference type="GO" id="GO:0043024">
    <property type="term" value="F:ribosomal small subunit binding"/>
    <property type="evidence" value="ECO:0007669"/>
    <property type="project" value="TreeGrafter"/>
</dbReference>
<dbReference type="GO" id="GO:0070181">
    <property type="term" value="F:small ribosomal subunit rRNA binding"/>
    <property type="evidence" value="ECO:0007669"/>
    <property type="project" value="UniProtKB-UniRule"/>
</dbReference>
<dbReference type="GO" id="GO:0000028">
    <property type="term" value="P:ribosomal small subunit assembly"/>
    <property type="evidence" value="ECO:0007669"/>
    <property type="project" value="TreeGrafter"/>
</dbReference>
<dbReference type="CDD" id="cd04163">
    <property type="entry name" value="Era"/>
    <property type="match status" value="1"/>
</dbReference>
<dbReference type="CDD" id="cd22534">
    <property type="entry name" value="KH-II_Era"/>
    <property type="match status" value="1"/>
</dbReference>
<dbReference type="FunFam" id="3.30.300.20:FF:000003">
    <property type="entry name" value="GTPase Era"/>
    <property type="match status" value="1"/>
</dbReference>
<dbReference type="FunFam" id="3.40.50.300:FF:000094">
    <property type="entry name" value="GTPase Era"/>
    <property type="match status" value="1"/>
</dbReference>
<dbReference type="Gene3D" id="3.30.300.20">
    <property type="match status" value="1"/>
</dbReference>
<dbReference type="Gene3D" id="3.40.50.300">
    <property type="entry name" value="P-loop containing nucleotide triphosphate hydrolases"/>
    <property type="match status" value="1"/>
</dbReference>
<dbReference type="HAMAP" id="MF_00367">
    <property type="entry name" value="GTPase_Era"/>
    <property type="match status" value="1"/>
</dbReference>
<dbReference type="InterPro" id="IPR030388">
    <property type="entry name" value="G_ERA_dom"/>
</dbReference>
<dbReference type="InterPro" id="IPR006073">
    <property type="entry name" value="GTP-bd"/>
</dbReference>
<dbReference type="InterPro" id="IPR005662">
    <property type="entry name" value="GTPase_Era-like"/>
</dbReference>
<dbReference type="InterPro" id="IPR015946">
    <property type="entry name" value="KH_dom-like_a/b"/>
</dbReference>
<dbReference type="InterPro" id="IPR004044">
    <property type="entry name" value="KH_dom_type_2"/>
</dbReference>
<dbReference type="InterPro" id="IPR009019">
    <property type="entry name" value="KH_sf_prok-type"/>
</dbReference>
<dbReference type="InterPro" id="IPR027417">
    <property type="entry name" value="P-loop_NTPase"/>
</dbReference>
<dbReference type="InterPro" id="IPR005225">
    <property type="entry name" value="Small_GTP-bd"/>
</dbReference>
<dbReference type="NCBIfam" id="TIGR00436">
    <property type="entry name" value="era"/>
    <property type="match status" value="1"/>
</dbReference>
<dbReference type="NCBIfam" id="NF000908">
    <property type="entry name" value="PRK00089.1"/>
    <property type="match status" value="1"/>
</dbReference>
<dbReference type="NCBIfam" id="TIGR00231">
    <property type="entry name" value="small_GTP"/>
    <property type="match status" value="1"/>
</dbReference>
<dbReference type="PANTHER" id="PTHR42698">
    <property type="entry name" value="GTPASE ERA"/>
    <property type="match status" value="1"/>
</dbReference>
<dbReference type="PANTHER" id="PTHR42698:SF1">
    <property type="entry name" value="GTPASE ERA, MITOCHONDRIAL"/>
    <property type="match status" value="1"/>
</dbReference>
<dbReference type="Pfam" id="PF07650">
    <property type="entry name" value="KH_2"/>
    <property type="match status" value="1"/>
</dbReference>
<dbReference type="Pfam" id="PF01926">
    <property type="entry name" value="MMR_HSR1"/>
    <property type="match status" value="1"/>
</dbReference>
<dbReference type="PRINTS" id="PR00326">
    <property type="entry name" value="GTP1OBG"/>
</dbReference>
<dbReference type="SUPFAM" id="SSF52540">
    <property type="entry name" value="P-loop containing nucleoside triphosphate hydrolases"/>
    <property type="match status" value="1"/>
</dbReference>
<dbReference type="SUPFAM" id="SSF54814">
    <property type="entry name" value="Prokaryotic type KH domain (KH-domain type II)"/>
    <property type="match status" value="1"/>
</dbReference>
<dbReference type="PROSITE" id="PS51713">
    <property type="entry name" value="G_ERA"/>
    <property type="match status" value="1"/>
</dbReference>
<dbReference type="PROSITE" id="PS50823">
    <property type="entry name" value="KH_TYPE_2"/>
    <property type="match status" value="1"/>
</dbReference>
<evidence type="ECO:0000255" key="1">
    <source>
        <dbReference type="HAMAP-Rule" id="MF_00367"/>
    </source>
</evidence>
<evidence type="ECO:0000255" key="2">
    <source>
        <dbReference type="PROSITE-ProRule" id="PRU01050"/>
    </source>
</evidence>
<feature type="chain" id="PRO_0000180035" description="GTPase Era">
    <location>
        <begin position="1"/>
        <end position="306"/>
    </location>
</feature>
<feature type="domain" description="Era-type G" evidence="2">
    <location>
        <begin position="13"/>
        <end position="181"/>
    </location>
</feature>
<feature type="domain" description="KH type-2" evidence="1">
    <location>
        <begin position="212"/>
        <end position="289"/>
    </location>
</feature>
<feature type="region of interest" description="G1" evidence="2">
    <location>
        <begin position="21"/>
        <end position="28"/>
    </location>
</feature>
<feature type="region of interest" description="G2" evidence="2">
    <location>
        <begin position="47"/>
        <end position="51"/>
    </location>
</feature>
<feature type="region of interest" description="G3" evidence="2">
    <location>
        <begin position="68"/>
        <end position="71"/>
    </location>
</feature>
<feature type="region of interest" description="G4" evidence="2">
    <location>
        <begin position="130"/>
        <end position="133"/>
    </location>
</feature>
<feature type="region of interest" description="G5" evidence="2">
    <location>
        <begin position="160"/>
        <end position="162"/>
    </location>
</feature>
<feature type="binding site" evidence="1">
    <location>
        <begin position="21"/>
        <end position="28"/>
    </location>
    <ligand>
        <name>GTP</name>
        <dbReference type="ChEBI" id="CHEBI:37565"/>
    </ligand>
</feature>
<feature type="binding site" evidence="1">
    <location>
        <begin position="68"/>
        <end position="72"/>
    </location>
    <ligand>
        <name>GTP</name>
        <dbReference type="ChEBI" id="CHEBI:37565"/>
    </ligand>
</feature>
<feature type="binding site" evidence="1">
    <location>
        <begin position="130"/>
        <end position="133"/>
    </location>
    <ligand>
        <name>GTP</name>
        <dbReference type="ChEBI" id="CHEBI:37565"/>
    </ligand>
</feature>
<protein>
    <recommendedName>
        <fullName evidence="1">GTPase Era</fullName>
    </recommendedName>
</protein>